<reference key="1">
    <citation type="journal article" date="2005" name="J. Bacteriol.">
        <title>Whole-genome sequencing of Staphylococcus haemolyticus uncovers the extreme plasticity of its genome and the evolution of human-colonizing staphylococcal species.</title>
        <authorList>
            <person name="Takeuchi F."/>
            <person name="Watanabe S."/>
            <person name="Baba T."/>
            <person name="Yuzawa H."/>
            <person name="Ito T."/>
            <person name="Morimoto Y."/>
            <person name="Kuroda M."/>
            <person name="Cui L."/>
            <person name="Takahashi M."/>
            <person name="Ankai A."/>
            <person name="Baba S."/>
            <person name="Fukui S."/>
            <person name="Lee J.C."/>
            <person name="Hiramatsu K."/>
        </authorList>
    </citation>
    <scope>NUCLEOTIDE SEQUENCE [LARGE SCALE GENOMIC DNA]</scope>
    <source>
        <strain>JCSC1435</strain>
    </source>
</reference>
<gene>
    <name evidence="1" type="primary">fabZ</name>
    <name type="ordered locus">SH0936</name>
</gene>
<proteinExistence type="inferred from homology"/>
<sequence length="145" mass="15934">METIFDYNQIKQIIPHRQPFLLIDRVVEYEEGKRCVGLKQVSGNEPFFQGHFPDYAVMPGVLITEALAQTGAVAMLNSEENKGKIALFAGIDKCRFKKQVTPGDTLMLEVEITKIKGPIGKGTAKATVDGQLACSCELTFAIQNA</sequence>
<evidence type="ECO:0000255" key="1">
    <source>
        <dbReference type="HAMAP-Rule" id="MF_00406"/>
    </source>
</evidence>
<feature type="chain" id="PRO_0000230839" description="3-hydroxyacyl-[acyl-carrier-protein] dehydratase FabZ">
    <location>
        <begin position="1"/>
        <end position="145"/>
    </location>
</feature>
<feature type="active site" evidence="1">
    <location>
        <position position="51"/>
    </location>
</feature>
<name>FABZ_STAHJ</name>
<dbReference type="EC" id="4.2.1.59" evidence="1"/>
<dbReference type="EMBL" id="AP006716">
    <property type="protein sequence ID" value="BAE04245.1"/>
    <property type="molecule type" value="Genomic_DNA"/>
</dbReference>
<dbReference type="RefSeq" id="WP_011275247.1">
    <property type="nucleotide sequence ID" value="NC_007168.1"/>
</dbReference>
<dbReference type="SMR" id="Q4L7Y0"/>
<dbReference type="GeneID" id="93780324"/>
<dbReference type="KEGG" id="sha:SH0936"/>
<dbReference type="eggNOG" id="COG0764">
    <property type="taxonomic scope" value="Bacteria"/>
</dbReference>
<dbReference type="HOGENOM" id="CLU_078912_3_0_9"/>
<dbReference type="OrthoDB" id="9772788at2"/>
<dbReference type="Proteomes" id="UP000000543">
    <property type="component" value="Chromosome"/>
</dbReference>
<dbReference type="GO" id="GO:0005737">
    <property type="term" value="C:cytoplasm"/>
    <property type="evidence" value="ECO:0007669"/>
    <property type="project" value="UniProtKB-SubCell"/>
</dbReference>
<dbReference type="GO" id="GO:0016020">
    <property type="term" value="C:membrane"/>
    <property type="evidence" value="ECO:0007669"/>
    <property type="project" value="GOC"/>
</dbReference>
<dbReference type="GO" id="GO:0019171">
    <property type="term" value="F:(3R)-hydroxyacyl-[acyl-carrier-protein] dehydratase activity"/>
    <property type="evidence" value="ECO:0007669"/>
    <property type="project" value="UniProtKB-EC"/>
</dbReference>
<dbReference type="GO" id="GO:0006633">
    <property type="term" value="P:fatty acid biosynthetic process"/>
    <property type="evidence" value="ECO:0007669"/>
    <property type="project" value="UniProtKB-UniRule"/>
</dbReference>
<dbReference type="GO" id="GO:0009245">
    <property type="term" value="P:lipid A biosynthetic process"/>
    <property type="evidence" value="ECO:0007669"/>
    <property type="project" value="UniProtKB-UniRule"/>
</dbReference>
<dbReference type="CDD" id="cd01288">
    <property type="entry name" value="FabZ"/>
    <property type="match status" value="1"/>
</dbReference>
<dbReference type="FunFam" id="3.10.129.10:FF:000001">
    <property type="entry name" value="3-hydroxyacyl-[acyl-carrier-protein] dehydratase FabZ"/>
    <property type="match status" value="1"/>
</dbReference>
<dbReference type="Gene3D" id="3.10.129.10">
    <property type="entry name" value="Hotdog Thioesterase"/>
    <property type="match status" value="1"/>
</dbReference>
<dbReference type="HAMAP" id="MF_00406">
    <property type="entry name" value="FabZ"/>
    <property type="match status" value="1"/>
</dbReference>
<dbReference type="InterPro" id="IPR013114">
    <property type="entry name" value="FabA_FabZ"/>
</dbReference>
<dbReference type="InterPro" id="IPR010084">
    <property type="entry name" value="FabZ"/>
</dbReference>
<dbReference type="InterPro" id="IPR029069">
    <property type="entry name" value="HotDog_dom_sf"/>
</dbReference>
<dbReference type="NCBIfam" id="TIGR01750">
    <property type="entry name" value="fabZ"/>
    <property type="match status" value="1"/>
</dbReference>
<dbReference type="NCBIfam" id="NF000582">
    <property type="entry name" value="PRK00006.1"/>
    <property type="match status" value="1"/>
</dbReference>
<dbReference type="PANTHER" id="PTHR30272">
    <property type="entry name" value="3-HYDROXYACYL-[ACYL-CARRIER-PROTEIN] DEHYDRATASE"/>
    <property type="match status" value="1"/>
</dbReference>
<dbReference type="PANTHER" id="PTHR30272:SF1">
    <property type="entry name" value="3-HYDROXYACYL-[ACYL-CARRIER-PROTEIN] DEHYDRATASE"/>
    <property type="match status" value="1"/>
</dbReference>
<dbReference type="Pfam" id="PF07977">
    <property type="entry name" value="FabA"/>
    <property type="match status" value="1"/>
</dbReference>
<dbReference type="SUPFAM" id="SSF54637">
    <property type="entry name" value="Thioesterase/thiol ester dehydrase-isomerase"/>
    <property type="match status" value="1"/>
</dbReference>
<organism>
    <name type="scientific">Staphylococcus haemolyticus (strain JCSC1435)</name>
    <dbReference type="NCBI Taxonomy" id="279808"/>
    <lineage>
        <taxon>Bacteria</taxon>
        <taxon>Bacillati</taxon>
        <taxon>Bacillota</taxon>
        <taxon>Bacilli</taxon>
        <taxon>Bacillales</taxon>
        <taxon>Staphylococcaceae</taxon>
        <taxon>Staphylococcus</taxon>
    </lineage>
</organism>
<protein>
    <recommendedName>
        <fullName evidence="1">3-hydroxyacyl-[acyl-carrier-protein] dehydratase FabZ</fullName>
        <ecNumber evidence="1">4.2.1.59</ecNumber>
    </recommendedName>
    <alternativeName>
        <fullName evidence="1">(3R)-hydroxymyristoyl-[acyl-carrier-protein] dehydratase</fullName>
        <shortName evidence="1">(3R)-hydroxymyristoyl-ACP dehydrase</shortName>
    </alternativeName>
    <alternativeName>
        <fullName evidence="1">Beta-hydroxyacyl-ACP dehydratase</fullName>
    </alternativeName>
</protein>
<keyword id="KW-0963">Cytoplasm</keyword>
<keyword id="KW-0441">Lipid A biosynthesis</keyword>
<keyword id="KW-0444">Lipid biosynthesis</keyword>
<keyword id="KW-0443">Lipid metabolism</keyword>
<keyword id="KW-0456">Lyase</keyword>
<accession>Q4L7Y0</accession>
<comment type="function">
    <text evidence="1">Involved in unsaturated fatty acids biosynthesis. Catalyzes the dehydration of short chain beta-hydroxyacyl-ACPs and long chain saturated and unsaturated beta-hydroxyacyl-ACPs.</text>
</comment>
<comment type="catalytic activity">
    <reaction evidence="1">
        <text>a (3R)-hydroxyacyl-[ACP] = a (2E)-enoyl-[ACP] + H2O</text>
        <dbReference type="Rhea" id="RHEA:13097"/>
        <dbReference type="Rhea" id="RHEA-COMP:9925"/>
        <dbReference type="Rhea" id="RHEA-COMP:9945"/>
        <dbReference type="ChEBI" id="CHEBI:15377"/>
        <dbReference type="ChEBI" id="CHEBI:78784"/>
        <dbReference type="ChEBI" id="CHEBI:78827"/>
        <dbReference type="EC" id="4.2.1.59"/>
    </reaction>
</comment>
<comment type="subcellular location">
    <subcellularLocation>
        <location evidence="1">Cytoplasm</location>
    </subcellularLocation>
</comment>
<comment type="similarity">
    <text evidence="1">Belongs to the thioester dehydratase family. FabZ subfamily.</text>
</comment>